<gene>
    <name type="primary">ldha</name>
</gene>
<name>LDHA_HARAN</name>
<keyword id="KW-0963">Cytoplasm</keyword>
<keyword id="KW-0520">NAD</keyword>
<keyword id="KW-0560">Oxidoreductase</keyword>
<proteinExistence type="evidence at transcript level"/>
<organism>
    <name type="scientific">Harpagifer antarcticus</name>
    <name type="common">Antarctic spiny plunderfish</name>
    <dbReference type="NCBI Taxonomy" id="43256"/>
    <lineage>
        <taxon>Eukaryota</taxon>
        <taxon>Metazoa</taxon>
        <taxon>Chordata</taxon>
        <taxon>Craniata</taxon>
        <taxon>Vertebrata</taxon>
        <taxon>Euteleostomi</taxon>
        <taxon>Actinopterygii</taxon>
        <taxon>Neopterygii</taxon>
        <taxon>Teleostei</taxon>
        <taxon>Neoteleostei</taxon>
        <taxon>Acanthomorphata</taxon>
        <taxon>Eupercaria</taxon>
        <taxon>Perciformes</taxon>
        <taxon>Notothenioidei</taxon>
        <taxon>Harpagiferidae</taxon>
        <taxon>Harpagifer</taxon>
    </lineage>
</organism>
<accession>O93537</accession>
<comment type="function">
    <text evidence="2">Interconverts simultaneously and stereospecifically pyruvate and lactate with concomitant interconversion of NADH and NAD(+).</text>
</comment>
<comment type="catalytic activity">
    <reaction evidence="2">
        <text>(S)-lactate + NAD(+) = pyruvate + NADH + H(+)</text>
        <dbReference type="Rhea" id="RHEA:23444"/>
        <dbReference type="ChEBI" id="CHEBI:15361"/>
        <dbReference type="ChEBI" id="CHEBI:15378"/>
        <dbReference type="ChEBI" id="CHEBI:16651"/>
        <dbReference type="ChEBI" id="CHEBI:57540"/>
        <dbReference type="ChEBI" id="CHEBI:57945"/>
        <dbReference type="EC" id="1.1.1.27"/>
    </reaction>
    <physiologicalReaction direction="left-to-right" evidence="2">
        <dbReference type="Rhea" id="RHEA:23445"/>
    </physiologicalReaction>
    <physiologicalReaction direction="right-to-left" evidence="2">
        <dbReference type="Rhea" id="RHEA:23446"/>
    </physiologicalReaction>
</comment>
<comment type="pathway">
    <text evidence="2">Fermentation; pyruvate fermentation to lactate; (S)-lactate from pyruvate: step 1/1.</text>
</comment>
<comment type="subunit">
    <text evidence="1">Homotetramer.</text>
</comment>
<comment type="subcellular location">
    <subcellularLocation>
        <location evidence="1">Cytoplasm</location>
    </subcellularLocation>
</comment>
<comment type="similarity">
    <text evidence="3">Belongs to the LDH/MDH superfamily. LDH family.</text>
</comment>
<protein>
    <recommendedName>
        <fullName>L-lactate dehydrogenase A chain</fullName>
        <shortName>LDH-A</shortName>
        <ecNumber evidence="2">1.1.1.27</ecNumber>
    </recommendedName>
</protein>
<feature type="initiator methionine" description="Removed" evidence="1">
    <location>
        <position position="1"/>
    </location>
</feature>
<feature type="chain" id="PRO_0000168442" description="L-lactate dehydrogenase A chain">
    <location>
        <begin position="2"/>
        <end position="331"/>
    </location>
</feature>
<feature type="active site" description="Proton acceptor" evidence="1">
    <location>
        <position position="192"/>
    </location>
</feature>
<feature type="binding site" evidence="1">
    <location>
        <begin position="29"/>
        <end position="57"/>
    </location>
    <ligand>
        <name>NAD(+)</name>
        <dbReference type="ChEBI" id="CHEBI:57540"/>
    </ligand>
</feature>
<feature type="binding site" evidence="1">
    <location>
        <position position="98"/>
    </location>
    <ligand>
        <name>NAD(+)</name>
        <dbReference type="ChEBI" id="CHEBI:57540"/>
    </ligand>
</feature>
<feature type="binding site" evidence="1">
    <location>
        <position position="105"/>
    </location>
    <ligand>
        <name>substrate</name>
    </ligand>
</feature>
<feature type="binding site" evidence="1">
    <location>
        <position position="137"/>
    </location>
    <ligand>
        <name>NAD(+)</name>
        <dbReference type="ChEBI" id="CHEBI:57540"/>
    </ligand>
</feature>
<feature type="binding site" evidence="1">
    <location>
        <position position="137"/>
    </location>
    <ligand>
        <name>substrate</name>
    </ligand>
</feature>
<feature type="binding site" evidence="1">
    <location>
        <position position="168"/>
    </location>
    <ligand>
        <name>substrate</name>
    </ligand>
</feature>
<feature type="binding site" evidence="1">
    <location>
        <position position="247"/>
    </location>
    <ligand>
        <name>substrate</name>
    </ligand>
</feature>
<evidence type="ECO:0000250" key="1"/>
<evidence type="ECO:0000250" key="2">
    <source>
        <dbReference type="UniProtKB" id="P00338"/>
    </source>
</evidence>
<evidence type="ECO:0000305" key="3"/>
<reference key="1">
    <citation type="journal article" date="1998" name="Proc. Natl. Acad. Sci. U.S.A.">
        <title>Hot spots in cold adaptation: localized increases in conformational flexibility in lactate dehydrogenase A4 orthologs of Antarctic notothenioid fishes.</title>
        <authorList>
            <person name="Fields P.A."/>
            <person name="Somero G.N."/>
        </authorList>
    </citation>
    <scope>NUCLEOTIDE SEQUENCE [MRNA]</scope>
    <source>
        <tissue>Muscle</tissue>
    </source>
</reference>
<dbReference type="EC" id="1.1.1.27" evidence="2"/>
<dbReference type="EMBL" id="AF079820">
    <property type="protein sequence ID" value="AAC63278.1"/>
    <property type="molecule type" value="mRNA"/>
</dbReference>
<dbReference type="SMR" id="O93537"/>
<dbReference type="UniPathway" id="UPA00554">
    <property type="reaction ID" value="UER00611"/>
</dbReference>
<dbReference type="GO" id="GO:0005737">
    <property type="term" value="C:cytoplasm"/>
    <property type="evidence" value="ECO:0007669"/>
    <property type="project" value="UniProtKB-SubCell"/>
</dbReference>
<dbReference type="GO" id="GO:0004459">
    <property type="term" value="F:L-lactate dehydrogenase activity"/>
    <property type="evidence" value="ECO:0007669"/>
    <property type="project" value="UniProtKB-EC"/>
</dbReference>
<dbReference type="GO" id="GO:0006089">
    <property type="term" value="P:lactate metabolic process"/>
    <property type="evidence" value="ECO:0007669"/>
    <property type="project" value="TreeGrafter"/>
</dbReference>
<dbReference type="CDD" id="cd05293">
    <property type="entry name" value="LDH_1"/>
    <property type="match status" value="1"/>
</dbReference>
<dbReference type="FunFam" id="3.40.50.720:FF:000029">
    <property type="entry name" value="L-lactate dehydrogenase A chain"/>
    <property type="match status" value="1"/>
</dbReference>
<dbReference type="FunFam" id="3.90.110.10:FF:000003">
    <property type="entry name" value="L-lactate dehydrogenase A chain"/>
    <property type="match status" value="1"/>
</dbReference>
<dbReference type="Gene3D" id="3.90.110.10">
    <property type="entry name" value="Lactate dehydrogenase/glycoside hydrolase, family 4, C-terminal"/>
    <property type="match status" value="1"/>
</dbReference>
<dbReference type="Gene3D" id="3.40.50.720">
    <property type="entry name" value="NAD(P)-binding Rossmann-like Domain"/>
    <property type="match status" value="1"/>
</dbReference>
<dbReference type="HAMAP" id="MF_00488">
    <property type="entry name" value="Lactate_dehydrog"/>
    <property type="match status" value="1"/>
</dbReference>
<dbReference type="InterPro" id="IPR001557">
    <property type="entry name" value="L-lactate/malate_DH"/>
</dbReference>
<dbReference type="InterPro" id="IPR011304">
    <property type="entry name" value="L-lactate_DH"/>
</dbReference>
<dbReference type="InterPro" id="IPR018177">
    <property type="entry name" value="L-lactate_DH_AS"/>
</dbReference>
<dbReference type="InterPro" id="IPR022383">
    <property type="entry name" value="Lactate/malate_DH_C"/>
</dbReference>
<dbReference type="InterPro" id="IPR001236">
    <property type="entry name" value="Lactate/malate_DH_N"/>
</dbReference>
<dbReference type="InterPro" id="IPR015955">
    <property type="entry name" value="Lactate_DH/Glyco_Ohase_4_C"/>
</dbReference>
<dbReference type="InterPro" id="IPR036291">
    <property type="entry name" value="NAD(P)-bd_dom_sf"/>
</dbReference>
<dbReference type="NCBIfam" id="TIGR01771">
    <property type="entry name" value="L-LDH-NAD"/>
    <property type="match status" value="1"/>
</dbReference>
<dbReference type="PANTHER" id="PTHR43128">
    <property type="entry name" value="L-2-HYDROXYCARBOXYLATE DEHYDROGENASE (NAD(P)(+))"/>
    <property type="match status" value="1"/>
</dbReference>
<dbReference type="PANTHER" id="PTHR43128:SF10">
    <property type="entry name" value="L-LACTATE DEHYDROGENASE A CHAIN"/>
    <property type="match status" value="1"/>
</dbReference>
<dbReference type="Pfam" id="PF02866">
    <property type="entry name" value="Ldh_1_C"/>
    <property type="match status" value="1"/>
</dbReference>
<dbReference type="Pfam" id="PF00056">
    <property type="entry name" value="Ldh_1_N"/>
    <property type="match status" value="1"/>
</dbReference>
<dbReference type="PIRSF" id="PIRSF000102">
    <property type="entry name" value="Lac_mal_DH"/>
    <property type="match status" value="1"/>
</dbReference>
<dbReference type="PRINTS" id="PR00086">
    <property type="entry name" value="LLDHDRGNASE"/>
</dbReference>
<dbReference type="SUPFAM" id="SSF56327">
    <property type="entry name" value="LDH C-terminal domain-like"/>
    <property type="match status" value="1"/>
</dbReference>
<dbReference type="SUPFAM" id="SSF51735">
    <property type="entry name" value="NAD(P)-binding Rossmann-fold domains"/>
    <property type="match status" value="1"/>
</dbReference>
<dbReference type="PROSITE" id="PS00064">
    <property type="entry name" value="L_LDH"/>
    <property type="match status" value="1"/>
</dbReference>
<sequence>MSTKEKLISHVMKEEPVGSRNKVTVVGVGMVGMASAISILIKDLGDELAMVDVMEDKLKGEVMDLQHGSLFLKTKIVGDKDYSVTANSKVVVVTAGARQQEGESRLNLVQRNVNIFKFIIPNIVKYSPNCILMVVSNPVDILTYVAWKLSGFPRHRVLGSGTNLDSARFRHLIGEKLHLHPSSCHAWIVGEHGDSSVPVWSGVNVAGVSLQNLNPQMGTEGDGENWKAIHKEVVDGAYEVIKLKGYTSWAIGMSVADLVESIIKNMHKVHPVSTLVQGMHGVKDEVFLSVPCVLGNSGLTDVIHMTLKAEEEKQVQKSAETLWGVQKELTL</sequence>